<accession>B0K8D0</accession>
<protein>
    <recommendedName>
        <fullName evidence="1">Octanoyltransferase</fullName>
        <ecNumber evidence="1">2.3.1.181</ecNumber>
    </recommendedName>
    <alternativeName>
        <fullName evidence="1">Lipoate-protein ligase B</fullName>
    </alternativeName>
    <alternativeName>
        <fullName evidence="1">Lipoyl/octanoyl transferase</fullName>
    </alternativeName>
    <alternativeName>
        <fullName evidence="1">Octanoyl-[acyl-carrier-protein]-protein N-octanoyltransferase</fullName>
    </alternativeName>
</protein>
<proteinExistence type="inferred from homology"/>
<feature type="chain" id="PRO_1000089479" description="Octanoyltransferase">
    <location>
        <begin position="1"/>
        <end position="228"/>
    </location>
</feature>
<feature type="domain" description="BPL/LPL catalytic" evidence="2">
    <location>
        <begin position="31"/>
        <end position="212"/>
    </location>
</feature>
<feature type="active site" description="Acyl-thioester intermediate" evidence="1">
    <location>
        <position position="174"/>
    </location>
</feature>
<feature type="binding site" evidence="1">
    <location>
        <begin position="76"/>
        <end position="83"/>
    </location>
    <ligand>
        <name>substrate</name>
    </ligand>
</feature>
<feature type="binding site" evidence="1">
    <location>
        <begin position="143"/>
        <end position="145"/>
    </location>
    <ligand>
        <name>substrate</name>
    </ligand>
</feature>
<feature type="binding site" evidence="1">
    <location>
        <begin position="156"/>
        <end position="158"/>
    </location>
    <ligand>
        <name>substrate</name>
    </ligand>
</feature>
<feature type="site" description="Lowers pKa of active site Cys" evidence="1">
    <location>
        <position position="140"/>
    </location>
</feature>
<sequence>MRKGEVLKLGIVPYMEGKEIQLKAFERVKKGETDGILILLQHPPVYTIGVSGGFDENILVPLAELKKKAELYKVERGGKITFHGPGQIVAYPIFNLAKWQKDVHLFVYKLEETIIKLLEEYGIKAGRKPKYTGVWVGDEKICAIGIAVRRWITWHGIAFNVNTDLSYFGLINACGITEFGVTSMQKLGINEDIEKVKEKMVDKFSEVFGIHFNEITLDRLAVIDNAKA</sequence>
<dbReference type="EC" id="2.3.1.181" evidence="1"/>
<dbReference type="EMBL" id="CP000924">
    <property type="protein sequence ID" value="ABY94443.1"/>
    <property type="molecule type" value="Genomic_DNA"/>
</dbReference>
<dbReference type="RefSeq" id="WP_012269176.1">
    <property type="nucleotide sequence ID" value="NC_010321.1"/>
</dbReference>
<dbReference type="SMR" id="B0K8D0"/>
<dbReference type="STRING" id="340099.Teth39_0786"/>
<dbReference type="KEGG" id="tpd:Teth39_0786"/>
<dbReference type="eggNOG" id="COG0321">
    <property type="taxonomic scope" value="Bacteria"/>
</dbReference>
<dbReference type="HOGENOM" id="CLU_035168_1_3_9"/>
<dbReference type="UniPathway" id="UPA00538">
    <property type="reaction ID" value="UER00592"/>
</dbReference>
<dbReference type="Proteomes" id="UP000002156">
    <property type="component" value="Chromosome"/>
</dbReference>
<dbReference type="GO" id="GO:0005737">
    <property type="term" value="C:cytoplasm"/>
    <property type="evidence" value="ECO:0007669"/>
    <property type="project" value="UniProtKB-SubCell"/>
</dbReference>
<dbReference type="GO" id="GO:0033819">
    <property type="term" value="F:lipoyl(octanoyl) transferase activity"/>
    <property type="evidence" value="ECO:0007669"/>
    <property type="project" value="UniProtKB-EC"/>
</dbReference>
<dbReference type="GO" id="GO:0036211">
    <property type="term" value="P:protein modification process"/>
    <property type="evidence" value="ECO:0007669"/>
    <property type="project" value="InterPro"/>
</dbReference>
<dbReference type="CDD" id="cd16444">
    <property type="entry name" value="LipB"/>
    <property type="match status" value="1"/>
</dbReference>
<dbReference type="Gene3D" id="3.30.930.10">
    <property type="entry name" value="Bira Bifunctional Protein, Domain 2"/>
    <property type="match status" value="1"/>
</dbReference>
<dbReference type="HAMAP" id="MF_00013">
    <property type="entry name" value="LipB"/>
    <property type="match status" value="1"/>
</dbReference>
<dbReference type="InterPro" id="IPR045864">
    <property type="entry name" value="aa-tRNA-synth_II/BPL/LPL"/>
</dbReference>
<dbReference type="InterPro" id="IPR004143">
    <property type="entry name" value="BPL_LPL_catalytic"/>
</dbReference>
<dbReference type="InterPro" id="IPR000544">
    <property type="entry name" value="Octanoyltransferase"/>
</dbReference>
<dbReference type="InterPro" id="IPR020605">
    <property type="entry name" value="Octanoyltransferase_CS"/>
</dbReference>
<dbReference type="NCBIfam" id="TIGR00214">
    <property type="entry name" value="lipB"/>
    <property type="match status" value="1"/>
</dbReference>
<dbReference type="NCBIfam" id="NF010925">
    <property type="entry name" value="PRK14345.1"/>
    <property type="match status" value="1"/>
</dbReference>
<dbReference type="PANTHER" id="PTHR10993:SF7">
    <property type="entry name" value="LIPOYLTRANSFERASE 2, MITOCHONDRIAL-RELATED"/>
    <property type="match status" value="1"/>
</dbReference>
<dbReference type="PANTHER" id="PTHR10993">
    <property type="entry name" value="OCTANOYLTRANSFERASE"/>
    <property type="match status" value="1"/>
</dbReference>
<dbReference type="Pfam" id="PF21948">
    <property type="entry name" value="LplA-B_cat"/>
    <property type="match status" value="1"/>
</dbReference>
<dbReference type="PIRSF" id="PIRSF016262">
    <property type="entry name" value="LPLase"/>
    <property type="match status" value="1"/>
</dbReference>
<dbReference type="SUPFAM" id="SSF55681">
    <property type="entry name" value="Class II aaRS and biotin synthetases"/>
    <property type="match status" value="1"/>
</dbReference>
<dbReference type="PROSITE" id="PS51733">
    <property type="entry name" value="BPL_LPL_CATALYTIC"/>
    <property type="match status" value="1"/>
</dbReference>
<dbReference type="PROSITE" id="PS01313">
    <property type="entry name" value="LIPB"/>
    <property type="match status" value="1"/>
</dbReference>
<name>LIPB_THEP3</name>
<evidence type="ECO:0000255" key="1">
    <source>
        <dbReference type="HAMAP-Rule" id="MF_00013"/>
    </source>
</evidence>
<evidence type="ECO:0000255" key="2">
    <source>
        <dbReference type="PROSITE-ProRule" id="PRU01067"/>
    </source>
</evidence>
<reference key="1">
    <citation type="submission" date="2008-01" db="EMBL/GenBank/DDBJ databases">
        <title>Complete sequence of Thermoanaerobacter pseudethanolicus 39E.</title>
        <authorList>
            <person name="Copeland A."/>
            <person name="Lucas S."/>
            <person name="Lapidus A."/>
            <person name="Barry K."/>
            <person name="Glavina del Rio T."/>
            <person name="Dalin E."/>
            <person name="Tice H."/>
            <person name="Pitluck S."/>
            <person name="Bruce D."/>
            <person name="Goodwin L."/>
            <person name="Saunders E."/>
            <person name="Brettin T."/>
            <person name="Detter J.C."/>
            <person name="Han C."/>
            <person name="Schmutz J."/>
            <person name="Larimer F."/>
            <person name="Land M."/>
            <person name="Hauser L."/>
            <person name="Kyrpides N."/>
            <person name="Lykidis A."/>
            <person name="Hemme C."/>
            <person name="Fields M.W."/>
            <person name="He Z."/>
            <person name="Zhou J."/>
            <person name="Richardson P."/>
        </authorList>
    </citation>
    <scope>NUCLEOTIDE SEQUENCE [LARGE SCALE GENOMIC DNA]</scope>
    <source>
        <strain>ATCC 33223 / DSM 2355 / 39E</strain>
    </source>
</reference>
<gene>
    <name evidence="1" type="primary">lipB</name>
    <name type="ordered locus">Teth39_0786</name>
</gene>
<comment type="function">
    <text evidence="1">Catalyzes the transfer of endogenously produced octanoic acid from octanoyl-acyl-carrier-protein onto the lipoyl domains of lipoate-dependent enzymes. Lipoyl-ACP can also act as a substrate although octanoyl-ACP is likely to be the physiological substrate.</text>
</comment>
<comment type="catalytic activity">
    <reaction evidence="1">
        <text>octanoyl-[ACP] + L-lysyl-[protein] = N(6)-octanoyl-L-lysyl-[protein] + holo-[ACP] + H(+)</text>
        <dbReference type="Rhea" id="RHEA:17665"/>
        <dbReference type="Rhea" id="RHEA-COMP:9636"/>
        <dbReference type="Rhea" id="RHEA-COMP:9685"/>
        <dbReference type="Rhea" id="RHEA-COMP:9752"/>
        <dbReference type="Rhea" id="RHEA-COMP:9928"/>
        <dbReference type="ChEBI" id="CHEBI:15378"/>
        <dbReference type="ChEBI" id="CHEBI:29969"/>
        <dbReference type="ChEBI" id="CHEBI:64479"/>
        <dbReference type="ChEBI" id="CHEBI:78463"/>
        <dbReference type="ChEBI" id="CHEBI:78809"/>
        <dbReference type="EC" id="2.3.1.181"/>
    </reaction>
</comment>
<comment type="pathway">
    <text evidence="1">Protein modification; protein lipoylation via endogenous pathway; protein N(6)-(lipoyl)lysine from octanoyl-[acyl-carrier-protein]: step 1/2.</text>
</comment>
<comment type="subcellular location">
    <subcellularLocation>
        <location evidence="1">Cytoplasm</location>
    </subcellularLocation>
</comment>
<comment type="miscellaneous">
    <text evidence="1">In the reaction, the free carboxyl group of octanoic acid is attached via an amide linkage to the epsilon-amino group of a specific lysine residue of lipoyl domains of lipoate-dependent enzymes.</text>
</comment>
<comment type="similarity">
    <text evidence="1">Belongs to the LipB family.</text>
</comment>
<keyword id="KW-0012">Acyltransferase</keyword>
<keyword id="KW-0963">Cytoplasm</keyword>
<keyword id="KW-1185">Reference proteome</keyword>
<keyword id="KW-0808">Transferase</keyword>
<organism>
    <name type="scientific">Thermoanaerobacter pseudethanolicus (strain ATCC 33223 / 39E)</name>
    <name type="common">Clostridium thermohydrosulfuricum</name>
    <dbReference type="NCBI Taxonomy" id="340099"/>
    <lineage>
        <taxon>Bacteria</taxon>
        <taxon>Bacillati</taxon>
        <taxon>Bacillota</taxon>
        <taxon>Clostridia</taxon>
        <taxon>Thermoanaerobacterales</taxon>
        <taxon>Thermoanaerobacteraceae</taxon>
        <taxon>Thermoanaerobacter</taxon>
    </lineage>
</organism>